<accession>P70581</accession>
<accession>Q9JHE1</accession>
<accession>Q9QWK7</accession>
<accession>Q9Z2W7</accession>
<sequence length="585" mass="59265">MATGFSFGSGTLGSTTVAPGGTGTGSGFSFGASSTPSVGLNFGTLGSSATPASTSTSASGFGTGLFGSKPGTGFTLGGTSAGTTATTSASTTGFSLGFSKPAASATPFALPVTSTTASGLTLSSALTSAPAASTGFTLNNLGATPATTTAASTGLSLGGALAGLGGSLFQSGNTATSGLGQNALSLSLGTATPTSAASSEGLGGIDFSTSSDKKSDKTGTRPEDSKALKDENLPPVICQDVENLQKFVKEQKQVQEEISRMSSKAMLKVQEDIKALKQLLSLAASGLQRNTLNIDKLKLETAQELKNAEIALRTQKTPPGLQHENTAPADYFRVLVQQFEVQLQQYRQQIEELENHLATQANNSHITPQDLSMAMQKIYQTFVALAAQLQSIHENVKVLKEQYLSYRKMFLGDAGDVFEARRTEAKKWQNAPRVTTGPTPFSTMPNAAAVAMAATLTQQQQPATGPQPSLGVSFGTPFGSGIGTGLQSSGLGSSNLGGFGTSSGFGCGTTGASTFGFGTTDKPSGSLSAGFGSSSTSGFNFSNPGITASAGLTFGVSNPASAGFGTGGQLLQLKRPPAGNKRGKR</sequence>
<dbReference type="EMBL" id="U63839">
    <property type="protein sequence ID" value="AAC52789.1"/>
    <property type="molecule type" value="mRNA"/>
</dbReference>
<dbReference type="EMBL" id="AH007036">
    <property type="protein sequence ID" value="AAC82539.1"/>
    <property type="molecule type" value="mRNA"/>
</dbReference>
<dbReference type="EMBL" id="AF000900">
    <property type="protein sequence ID" value="AAC82318.1"/>
    <property type="molecule type" value="mRNA"/>
</dbReference>
<dbReference type="EMBL" id="BC085690">
    <property type="protein sequence ID" value="AAH85690.1"/>
    <property type="molecule type" value="mRNA"/>
</dbReference>
<dbReference type="EMBL" id="AF000901">
    <property type="protein sequence ID" value="AAC82319.1"/>
    <property type="molecule type" value="mRNA"/>
</dbReference>
<dbReference type="RefSeq" id="NP_620791.1">
    <molecule id="P70581-1"/>
    <property type="nucleotide sequence ID" value="NM_139091.2"/>
</dbReference>
<dbReference type="PDB" id="2OSZ">
    <property type="method" value="X-ray"/>
    <property type="resolution" value="2.85 A"/>
    <property type="chains" value="A/B/C/D=327-415"/>
</dbReference>
<dbReference type="PDB" id="3T98">
    <property type="method" value="X-ray"/>
    <property type="resolution" value="2.50 A"/>
    <property type="chains" value="B=327-415"/>
</dbReference>
<dbReference type="PDBsum" id="2OSZ"/>
<dbReference type="PDBsum" id="3T98"/>
<dbReference type="SMR" id="P70581"/>
<dbReference type="BioGRID" id="251446">
    <property type="interactions" value="1"/>
</dbReference>
<dbReference type="CORUM" id="P70581"/>
<dbReference type="FunCoup" id="P70581">
    <property type="interactions" value="4037"/>
</dbReference>
<dbReference type="STRING" id="10116.ENSRNOP00000017204"/>
<dbReference type="GlyGen" id="P70581">
    <property type="glycosylation" value="4 sites"/>
</dbReference>
<dbReference type="PhosphoSitePlus" id="P70581"/>
<dbReference type="jPOST" id="P70581"/>
<dbReference type="PaxDb" id="10116-ENSRNOP00000017204"/>
<dbReference type="Ensembl" id="ENSRNOT00000063943.3">
    <molecule id="P70581-2"/>
    <property type="protein sequence ID" value="ENSRNOP00000063452.3"/>
    <property type="gene ID" value="ENSRNOG00000012644.9"/>
</dbReference>
<dbReference type="Ensembl" id="ENSRNOT00000095956.1">
    <molecule id="P70581-1"/>
    <property type="protein sequence ID" value="ENSRNOP00000084647.1"/>
    <property type="gene ID" value="ENSRNOG00000012644.9"/>
</dbReference>
<dbReference type="GeneID" id="245922"/>
<dbReference type="KEGG" id="rno:245922"/>
<dbReference type="UCSC" id="RGD:631334">
    <molecule id="P70581-1"/>
    <property type="organism name" value="rat"/>
</dbReference>
<dbReference type="AGR" id="RGD:631334"/>
<dbReference type="CTD" id="9818"/>
<dbReference type="RGD" id="631334">
    <property type="gene designation" value="Nup58"/>
</dbReference>
<dbReference type="eggNOG" id="ENOG502QRD8">
    <property type="taxonomic scope" value="Eukaryota"/>
</dbReference>
<dbReference type="GeneTree" id="ENSGT00730000111111"/>
<dbReference type="HOGENOM" id="CLU_034851_1_0_1"/>
<dbReference type="InParanoid" id="P70581"/>
<dbReference type="OMA" id="RDNTDVF"/>
<dbReference type="OrthoDB" id="2538017at2759"/>
<dbReference type="PhylomeDB" id="P70581"/>
<dbReference type="Reactome" id="R-RNO-159227">
    <property type="pathway name" value="Transport of the SLBP independent Mature mRNA"/>
</dbReference>
<dbReference type="Reactome" id="R-RNO-159230">
    <property type="pathway name" value="Transport of the SLBP Dependant Mature mRNA"/>
</dbReference>
<dbReference type="Reactome" id="R-RNO-159231">
    <property type="pathway name" value="Transport of Mature mRNA Derived from an Intronless Transcript"/>
</dbReference>
<dbReference type="Reactome" id="R-RNO-159236">
    <property type="pathway name" value="Transport of Mature mRNA derived from an Intron-Containing Transcript"/>
</dbReference>
<dbReference type="Reactome" id="R-RNO-170822">
    <property type="pathway name" value="Regulation of Glucokinase by Glucokinase Regulatory Protein"/>
</dbReference>
<dbReference type="Reactome" id="R-RNO-191859">
    <property type="pathway name" value="snRNP Assembly"/>
</dbReference>
<dbReference type="Reactome" id="R-RNO-3108214">
    <property type="pathway name" value="SUMOylation of DNA damage response and repair proteins"/>
</dbReference>
<dbReference type="Reactome" id="R-RNO-3232142">
    <property type="pathway name" value="SUMOylation of ubiquitinylation proteins"/>
</dbReference>
<dbReference type="Reactome" id="R-RNO-3301854">
    <property type="pathway name" value="Nuclear Pore Complex (NPC) Disassembly"/>
</dbReference>
<dbReference type="Reactome" id="R-RNO-3371453">
    <property type="pathway name" value="Regulation of HSF1-mediated heat shock response"/>
</dbReference>
<dbReference type="Reactome" id="R-RNO-4085377">
    <property type="pathway name" value="SUMOylation of SUMOylation proteins"/>
</dbReference>
<dbReference type="Reactome" id="R-RNO-4551638">
    <property type="pathway name" value="SUMOylation of chromatin organization proteins"/>
</dbReference>
<dbReference type="Reactome" id="R-RNO-4570464">
    <property type="pathway name" value="SUMOylation of RNA binding proteins"/>
</dbReference>
<dbReference type="Reactome" id="R-RNO-4615885">
    <property type="pathway name" value="SUMOylation of DNA replication proteins"/>
</dbReference>
<dbReference type="Reactome" id="R-RNO-5578749">
    <property type="pathway name" value="Transcriptional regulation by small RNAs"/>
</dbReference>
<dbReference type="EvolutionaryTrace" id="P70581"/>
<dbReference type="PRO" id="PR:P70581"/>
<dbReference type="Proteomes" id="UP000002494">
    <property type="component" value="Chromosome 15"/>
</dbReference>
<dbReference type="Bgee" id="ENSRNOG00000012644">
    <property type="expression patterns" value="Expressed in testis and 19 other cell types or tissues"/>
</dbReference>
<dbReference type="ExpressionAtlas" id="P70581">
    <property type="expression patterns" value="baseline and differential"/>
</dbReference>
<dbReference type="GO" id="GO:0005635">
    <property type="term" value="C:nuclear envelope"/>
    <property type="evidence" value="ECO:0000314"/>
    <property type="project" value="RGD"/>
</dbReference>
<dbReference type="GO" id="GO:0031965">
    <property type="term" value="C:nuclear membrane"/>
    <property type="evidence" value="ECO:0007669"/>
    <property type="project" value="UniProtKB-SubCell"/>
</dbReference>
<dbReference type="GO" id="GO:0005643">
    <property type="term" value="C:nuclear pore"/>
    <property type="evidence" value="ECO:0000314"/>
    <property type="project" value="UniProtKB"/>
</dbReference>
<dbReference type="GO" id="GO:0032991">
    <property type="term" value="C:protein-containing complex"/>
    <property type="evidence" value="ECO:0000314"/>
    <property type="project" value="RGD"/>
</dbReference>
<dbReference type="GO" id="GO:0042802">
    <property type="term" value="F:identical protein binding"/>
    <property type="evidence" value="ECO:0000353"/>
    <property type="project" value="RGD"/>
</dbReference>
<dbReference type="GO" id="GO:0008139">
    <property type="term" value="F:nuclear localization sequence binding"/>
    <property type="evidence" value="ECO:0000314"/>
    <property type="project" value="RGD"/>
</dbReference>
<dbReference type="GO" id="GO:0044877">
    <property type="term" value="F:protein-containing complex binding"/>
    <property type="evidence" value="ECO:0000314"/>
    <property type="project" value="RGD"/>
</dbReference>
<dbReference type="GO" id="GO:0017056">
    <property type="term" value="F:structural constituent of nuclear pore"/>
    <property type="evidence" value="ECO:0000314"/>
    <property type="project" value="UniProtKB"/>
</dbReference>
<dbReference type="GO" id="GO:0051028">
    <property type="term" value="P:mRNA transport"/>
    <property type="evidence" value="ECO:0007669"/>
    <property type="project" value="UniProtKB-KW"/>
</dbReference>
<dbReference type="GO" id="GO:0006913">
    <property type="term" value="P:nucleocytoplasmic transport"/>
    <property type="evidence" value="ECO:0000314"/>
    <property type="project" value="UniProtKB"/>
</dbReference>
<dbReference type="GO" id="GO:0015031">
    <property type="term" value="P:protein transport"/>
    <property type="evidence" value="ECO:0007669"/>
    <property type="project" value="UniProtKB-KW"/>
</dbReference>
<dbReference type="GO" id="GO:0042306">
    <property type="term" value="P:regulation of protein import into nucleus"/>
    <property type="evidence" value="ECO:0000314"/>
    <property type="project" value="RGD"/>
</dbReference>
<dbReference type="Gene3D" id="6.10.140.1350">
    <property type="match status" value="1"/>
</dbReference>
<dbReference type="InterPro" id="IPR024882">
    <property type="entry name" value="NUP58/p45/49"/>
</dbReference>
<dbReference type="PANTHER" id="PTHR13437">
    <property type="entry name" value="NUCLEOPORIN P58/P45 NUCLEOPORIN-LIKE PROTEIN 1"/>
    <property type="match status" value="1"/>
</dbReference>
<dbReference type="PANTHER" id="PTHR13437:SF2">
    <property type="entry name" value="NUCLEOPORIN P58_P45"/>
    <property type="match status" value="1"/>
</dbReference>
<dbReference type="Pfam" id="PF15967">
    <property type="entry name" value="Nucleoporin_FG2"/>
    <property type="match status" value="1"/>
</dbReference>
<protein>
    <recommendedName>
        <fullName evidence="7">Nucleoporin p58/p45</fullName>
    </recommendedName>
    <alternativeName>
        <fullName evidence="8">58 kDa nucleoporin</fullName>
    </alternativeName>
    <alternativeName>
        <fullName>Nucleoporin-like protein 1</fullName>
    </alternativeName>
</protein>
<evidence type="ECO:0000250" key="1">
    <source>
        <dbReference type="UniProtKB" id="Q9BVL2"/>
    </source>
</evidence>
<evidence type="ECO:0000255" key="2"/>
<evidence type="ECO:0000256" key="3">
    <source>
        <dbReference type="SAM" id="MobiDB-lite"/>
    </source>
</evidence>
<evidence type="ECO:0000269" key="4">
    <source>
    </source>
</evidence>
<evidence type="ECO:0000269" key="5">
    <source>
    </source>
</evidence>
<evidence type="ECO:0000303" key="6">
    <source>
    </source>
</evidence>
<evidence type="ECO:0000305" key="7"/>
<evidence type="ECO:0000312" key="8">
    <source>
        <dbReference type="RGD" id="631334"/>
    </source>
</evidence>
<evidence type="ECO:0007829" key="9">
    <source>
        <dbReference type="PDB" id="3T98"/>
    </source>
</evidence>
<keyword id="KW-0002">3D-structure</keyword>
<keyword id="KW-0025">Alternative splicing</keyword>
<keyword id="KW-0175">Coiled coil</keyword>
<keyword id="KW-0903">Direct protein sequencing</keyword>
<keyword id="KW-0325">Glycoprotein</keyword>
<keyword id="KW-0472">Membrane</keyword>
<keyword id="KW-0509">mRNA transport</keyword>
<keyword id="KW-0906">Nuclear pore complex</keyword>
<keyword id="KW-0539">Nucleus</keyword>
<keyword id="KW-0597">Phosphoprotein</keyword>
<keyword id="KW-0653">Protein transport</keyword>
<keyword id="KW-1185">Reference proteome</keyword>
<keyword id="KW-0677">Repeat</keyword>
<keyword id="KW-0811">Translocation</keyword>
<keyword id="KW-0813">Transport</keyword>
<name>NUP58_RAT</name>
<reference key="1">
    <citation type="journal article" date="1996" name="J. Cell Biol.">
        <title>Molecular and functional characterization of the p62 complex, an assembly of nuclear pore complex glycoproteins.</title>
        <authorList>
            <person name="Hu T."/>
            <person name="Guan T."/>
            <person name="Gerace L."/>
        </authorList>
    </citation>
    <scope>NUCLEOTIDE SEQUENCE [MRNA] (ISOFORM P58)</scope>
    <scope>PROTEIN SEQUENCE OF 227-237; 317-333; 409-422 AND 427-433</scope>
    <scope>ALTERNATIVE SPLICING</scope>
    <scope>FUNCTION</scope>
    <scope>SUBCELLULAR LOCATION</scope>
    <scope>IDENTIFICATION IN A COMPLEX WITH NUP62 AND NUP54</scope>
    <scope>INTERACTION WITH NUTF2</scope>
    <source>
        <tissue>Macrophage</tissue>
    </source>
</reference>
<reference key="2">
    <citation type="journal article" date="1998" name="Gene">
        <title>cDNA cloning and analysis of the expression of nucleoporin p45.</title>
        <authorList>
            <person name="Hu T."/>
            <person name="Gerace L."/>
        </authorList>
    </citation>
    <scope>NUCLEOTIDE SEQUENCE [MRNA] (ISOFORMS P45 AND P23)</scope>
    <scope>NUCLEOTIDE SEQUENCE OF 309-585 (ISOFORM H6)</scope>
    <scope>TISSUE SPECIFICITY</scope>
    <source>
        <tissue>Macrophage</tissue>
    </source>
</reference>
<reference key="3">
    <citation type="journal article" date="2004" name="Genome Res.">
        <title>The status, quality, and expansion of the NIH full-length cDNA project: the Mammalian Gene Collection (MGC).</title>
        <authorList>
            <consortium name="The MGC Project Team"/>
        </authorList>
    </citation>
    <scope>NUCLEOTIDE SEQUENCE [LARGE SCALE MRNA] (ISOFORM P58)</scope>
    <source>
        <tissue>Heart</tissue>
    </source>
</reference>
<feature type="chain" id="PRO_0000204894" description="Nucleoporin p58/p45">
    <location>
        <begin position="1"/>
        <end position="585"/>
    </location>
</feature>
<feature type="repeat" description="1">
    <location>
        <begin position="7"/>
        <end position="8"/>
    </location>
</feature>
<feature type="repeat" description="2">
    <location>
        <begin position="30"/>
        <end position="31"/>
    </location>
</feature>
<feature type="repeat" description="3">
    <location>
        <begin position="42"/>
        <end position="43"/>
    </location>
</feature>
<feature type="repeat" description="4">
    <location>
        <begin position="61"/>
        <end position="62"/>
    </location>
</feature>
<feature type="repeat" description="5">
    <location>
        <begin position="66"/>
        <end position="67"/>
    </location>
</feature>
<feature type="repeat" description="6">
    <location>
        <begin position="474"/>
        <end position="475"/>
    </location>
</feature>
<feature type="repeat" description="7">
    <location>
        <begin position="478"/>
        <end position="479"/>
    </location>
</feature>
<feature type="repeat" description="8">
    <location>
        <begin position="499"/>
        <end position="500"/>
    </location>
</feature>
<feature type="repeat" description="9">
    <location>
        <begin position="505"/>
        <end position="506"/>
    </location>
</feature>
<feature type="repeat" description="10">
    <location>
        <begin position="515"/>
        <end position="516"/>
    </location>
</feature>
<feature type="repeat" description="11">
    <location>
        <begin position="517"/>
        <end position="518"/>
    </location>
</feature>
<feature type="repeat" description="12">
    <location>
        <begin position="531"/>
        <end position="532"/>
    </location>
</feature>
<feature type="repeat" description="13">
    <location>
        <begin position="554"/>
        <end position="555"/>
    </location>
</feature>
<feature type="repeat" description="14">
    <location>
        <begin position="564"/>
        <end position="565"/>
    </location>
</feature>
<feature type="region of interest" description="14 X 2 AA repeats of F-G">
    <location>
        <begin position="7"/>
        <end position="565"/>
    </location>
</feature>
<feature type="region of interest" description="Disordered" evidence="3">
    <location>
        <begin position="194"/>
        <end position="232"/>
    </location>
</feature>
<feature type="region of interest" description="Disordered" evidence="3">
    <location>
        <begin position="563"/>
        <end position="585"/>
    </location>
</feature>
<feature type="coiled-coil region" evidence="2">
    <location>
        <begin position="242"/>
        <end position="262"/>
    </location>
</feature>
<feature type="coiled-coil region" evidence="2">
    <location>
        <begin position="300"/>
        <end position="367"/>
    </location>
</feature>
<feature type="compositionally biased region" description="Basic and acidic residues" evidence="3">
    <location>
        <begin position="211"/>
        <end position="232"/>
    </location>
</feature>
<feature type="modified residue" description="Phosphothreonine" evidence="1">
    <location>
        <position position="317"/>
    </location>
</feature>
<feature type="splice variant" id="VSP_008582" description="In isoform p23." evidence="6">
    <location>
        <begin position="1"/>
        <end position="260"/>
    </location>
</feature>
<feature type="splice variant" id="VSP_008579" description="In isoform p45." evidence="6">
    <location>
        <begin position="224"/>
        <end position="245"/>
    </location>
</feature>
<feature type="splice variant" id="VSP_008576" description="In isoform p23." evidence="6">
    <original>PADYFRVLVQ</original>
    <variation>SPDDERLQVH</variation>
    <location>
        <begin position="328"/>
        <end position="337"/>
    </location>
</feature>
<feature type="splice variant" id="VSP_008583" description="In isoform H6." evidence="7">
    <original>PQPSLG</original>
    <variation>LNAFKL</variation>
    <location>
        <begin position="466"/>
        <end position="471"/>
    </location>
</feature>
<feature type="splice variant" id="VSP_008577" description="In isoform p23." evidence="6">
    <original>PQP</original>
    <variation>DGW</variation>
    <location>
        <begin position="466"/>
        <end position="468"/>
    </location>
</feature>
<feature type="splice variant" id="VSP_008578" description="In isoform p23." evidence="6">
    <location>
        <begin position="469"/>
        <end position="585"/>
    </location>
</feature>
<feature type="splice variant" id="VSP_008584" description="In isoform H6." evidence="7">
    <location>
        <begin position="472"/>
        <end position="585"/>
    </location>
</feature>
<feature type="splice variant" id="VSP_008580" description="In isoform p45." evidence="6">
    <original>FGSSS</original>
    <variation>LCASA</variation>
    <location>
        <begin position="531"/>
        <end position="535"/>
    </location>
</feature>
<feature type="splice variant" id="VSP_008581" description="In isoform p45." evidence="6">
    <location>
        <begin position="536"/>
        <end position="585"/>
    </location>
</feature>
<feature type="helix" evidence="9">
    <location>
        <begin position="328"/>
        <end position="357"/>
    </location>
</feature>
<feature type="helix" evidence="9">
    <location>
        <begin position="360"/>
        <end position="363"/>
    </location>
</feature>
<feature type="helix" evidence="9">
    <location>
        <begin position="368"/>
        <end position="410"/>
    </location>
</feature>
<organism>
    <name type="scientific">Rattus norvegicus</name>
    <name type="common">Rat</name>
    <dbReference type="NCBI Taxonomy" id="10116"/>
    <lineage>
        <taxon>Eukaryota</taxon>
        <taxon>Metazoa</taxon>
        <taxon>Chordata</taxon>
        <taxon>Craniata</taxon>
        <taxon>Vertebrata</taxon>
        <taxon>Euteleostomi</taxon>
        <taxon>Mammalia</taxon>
        <taxon>Eutheria</taxon>
        <taxon>Euarchontoglires</taxon>
        <taxon>Glires</taxon>
        <taxon>Rodentia</taxon>
        <taxon>Myomorpha</taxon>
        <taxon>Muroidea</taxon>
        <taxon>Muridae</taxon>
        <taxon>Murinae</taxon>
        <taxon>Rattus</taxon>
    </lineage>
</organism>
<comment type="function">
    <text evidence="4">Component of the nuclear pore complex, a complex required for the trafficking across the nuclear membrane.</text>
</comment>
<comment type="subunit">
    <text evidence="4">Component of the p62 complex, a complex composed of NUP62, NUP54, and isoform p58 and isoform p45 of NUP58. Isoform p58 interacts with NUTF2. Isoform p58 interacts with SRP1-alpha and Importin p97 proteins when they are together, but not with SRP1-alpha protein alone.</text>
</comment>
<comment type="subcellular location">
    <subcellularLocation>
        <location evidence="4">Nucleus</location>
        <location evidence="4">Nuclear pore complex</location>
    </subcellularLocation>
    <subcellularLocation>
        <location evidence="4">Nucleus membrane</location>
        <topology evidence="4">Peripheral membrane protein</topology>
        <orientation evidence="4">Cytoplasmic side</orientation>
    </subcellularLocation>
    <subcellularLocation>
        <location evidence="4">Nucleus membrane</location>
        <topology evidence="4">Peripheral membrane protein</topology>
        <orientation evidence="4">Nucleoplasmic side</orientation>
    </subcellularLocation>
    <text>Biased towards cytoplasmic side. Central region of the nuclear pore complex, within the transporter.</text>
</comment>
<comment type="alternative products">
    <event type="alternative splicing"/>
    <isoform>
        <id>P70581-1</id>
        <name>p58</name>
        <sequence type="displayed"/>
    </isoform>
    <isoform>
        <id>P70581-2</id>
        <name>p45</name>
        <sequence type="described" ref="VSP_008579 VSP_008580 VSP_008581"/>
    </isoform>
    <isoform>
        <id>P70581-3</id>
        <name>p23</name>
        <sequence type="described" ref="VSP_008582 VSP_008576 VSP_008577 VSP_008578"/>
    </isoform>
    <isoform>
        <id>P70581-4</id>
        <name>H6</name>
        <sequence type="described" ref="VSP_008583 VSP_008584"/>
    </isoform>
</comment>
<comment type="tissue specificity">
    <text evidence="5">Expressed in liver.</text>
</comment>
<comment type="domain">
    <text evidence="7">Contains FG repeats. FG repeats are interaction sites for karyopherins (importins, exportins) and form probably an affinity gradient, guiding the transport proteins unidirectionally with their cargo through the NPC. FG repeat regions are highly flexible and lack ordered secondary structure. The overall conservation of FG repeats regarding exact sequence, spacing, and repeat unit length is limited.</text>
</comment>
<comment type="PTM">
    <text>O-glycosylated.</text>
</comment>
<comment type="similarity">
    <text evidence="7">Belongs to the NUP58 family.</text>
</comment>
<gene>
    <name evidence="8" type="primary">Nup58</name>
    <name type="synonym">Nupl1</name>
</gene>
<proteinExistence type="evidence at protein level"/>